<comment type="function">
    <text evidence="1 6">GTPase activator for the nuclear Ras-related regulatory proteins Rap1 and Rap2 in vitro, converting them to the putatively inactive GDP-bound state (PubMed:9346962). Affects cell cycle progression (By similarity).</text>
</comment>
<comment type="subunit">
    <text evidence="1">Interacts with RRP1B; the interaction leads to inhibition of SIPA1 GTPase activity.</text>
</comment>
<comment type="interaction">
    <interactant intactId="EBI-1054981">
        <id>Q96FS4</id>
    </interactant>
    <interactant intactId="EBI-375077">
        <id>P38936</id>
        <label>CDKN1A</label>
    </interactant>
    <organismsDiffer>false</organismsDiffer>
    <experiments>2</experiments>
</comment>
<comment type="subcellular location">
    <subcellularLocation>
        <location evidence="6">Nucleus</location>
    </subcellularLocation>
    <subcellularLocation>
        <location evidence="6">Cytoplasm</location>
        <location evidence="6">Perinuclear region</location>
    </subcellularLocation>
    <subcellularLocation>
        <location>Endomembrane system</location>
        <topology evidence="6">Peripheral membrane protein</topology>
    </subcellularLocation>
    <text evidence="6">Mostly localized in the perinuclear membraneous region.</text>
</comment>
<comment type="tissue specificity">
    <text>Expressed in fetal as well as in adult tissues. Expressed abundantly in the lymphoid tissues such as thymus, spleen and peripheral blood lymphocytes and also shows a significant expression in the spinal cord.</text>
</comment>
<comment type="induction">
    <text>Repressed by 12-O-tetradecanoylphorbol-13-acetate (TPA) in promyelocytic HL-60 cells.</text>
</comment>
<comment type="online information" name="Atlas of Genetics and Cytogenetics in Oncology and Haematology">
    <link uri="https://atlasgeneticsoncology.org/gene/46282/SIPA1"/>
</comment>
<protein>
    <recommendedName>
        <fullName>Signal-induced proliferation-associated protein 1</fullName>
        <shortName>Sipa-1</shortName>
    </recommendedName>
    <alternativeName>
        <fullName>GTPase-activating protein Spa-1</fullName>
    </alternativeName>
    <alternativeName>
        <fullName>p130 SPA-1</fullName>
    </alternativeName>
</protein>
<sequence length="1042" mass="112149">MPMWAGGVGSPRRGMAPASTDDLFARKLRQPARPPLTPHTFEPRPVRGPLLRSGSDAGEARPPTPASPRARAHSHEEASRPAATSTRLFTDPLALLGLPAEEPEPAFPPVLEPRWFAHYDVQSLLFDWAPRSQGMGSHSEASSGTLASAEDQAASSDLLHGAPGFVCELGGEGELGLGGPASPPVPPALPNAAVSILEEPQNRTSAYSLEHADLGAGYYRKYFYGKEHQNFFGMDESLGPVAVSLRREEKEGSGGGTLHSYRVIVRTTQLRTLRGTISEDALPPGPPRGLSPRKLLEHVAPQLSPSCLRLGSASPKVPRTLLTLDEQVLSFQRKVGILYCRAGQGSEEEMYNNQEAGPAFMQFLTLLGDVVRLKGFESYRAQLDTKTDSTGTHSLYTTYQDHEIMFHVSTMLPYTPNNQQQLLRKRHIGNDIVTIVFQEPGSKPFCPTTIRSHFQHVFLVVRAHTPCTPHTTYRVAVSRTQDTPAFGPALPAGGGPFAANADFRAFLLAKALNGEQAAGHARQFHAMATRTRQQYLQDLATNEVTTTSLDSASRFGLPSLGGRRRAAPRGPGAELQAAGSLVWGVRAAPGARVAAGAQASGPEGIEVPCLLGISAEALVLVAPRDGRVVFNCACRDVLAWTFSEQQLDLYHGRGEAITLRFDGSPGQAVGEVVARLQLVSRGCETRELALPRDGQGRLGFEVDAEGFVTHVERFTFAETAGLRPGARLLRVCGQTLPSLRPEAAAQLLRSAPKVCVTVLPPDESGRPRRSFSELYTLSLQEPSRRGAPDPVQDEVQGVTLLPTTKQLLHLCLQDGGSPPGPGDLAEERTEFLHSQNSLSPRSSLSDEAPVLPNTTPDLLLATTAKPSVPSADSETPLTQDRPGSPSGSEDKGNPAPELRASFLPRTLSLRNSISRIMSEAGSGTLEDEWQAISEIASTCNTILESLSREGQPIPESGDPKGTPKSDAEPEPGNLSEKVSHLESMLRKLQEDLQKEKADRAALEEEVRSLRHNNRRLQAESESAATRLLLASKQLGSPTADLA</sequence>
<organism>
    <name type="scientific">Homo sapiens</name>
    <name type="common">Human</name>
    <dbReference type="NCBI Taxonomy" id="9606"/>
    <lineage>
        <taxon>Eukaryota</taxon>
        <taxon>Metazoa</taxon>
        <taxon>Chordata</taxon>
        <taxon>Craniata</taxon>
        <taxon>Vertebrata</taxon>
        <taxon>Euteleostomi</taxon>
        <taxon>Mammalia</taxon>
        <taxon>Eutheria</taxon>
        <taxon>Euarchontoglires</taxon>
        <taxon>Primates</taxon>
        <taxon>Haplorrhini</taxon>
        <taxon>Catarrhini</taxon>
        <taxon>Hominidae</taxon>
        <taxon>Homo</taxon>
    </lineage>
</organism>
<evidence type="ECO:0000250" key="1">
    <source>
        <dbReference type="UniProtKB" id="P46062"/>
    </source>
</evidence>
<evidence type="ECO:0000255" key="2"/>
<evidence type="ECO:0000255" key="3">
    <source>
        <dbReference type="PROSITE-ProRule" id="PRU00143"/>
    </source>
</evidence>
<evidence type="ECO:0000255" key="4">
    <source>
        <dbReference type="PROSITE-ProRule" id="PRU00165"/>
    </source>
</evidence>
<evidence type="ECO:0000256" key="5">
    <source>
        <dbReference type="SAM" id="MobiDB-lite"/>
    </source>
</evidence>
<evidence type="ECO:0000269" key="6">
    <source>
    </source>
</evidence>
<evidence type="ECO:0000305" key="7"/>
<evidence type="ECO:0007744" key="8">
    <source>
    </source>
</evidence>
<evidence type="ECO:0007744" key="9">
    <source>
    </source>
</evidence>
<evidence type="ECO:0007744" key="10">
    <source>
    </source>
</evidence>
<evidence type="ECO:0007744" key="11">
    <source>
    </source>
</evidence>
<accession>Q96FS4</accession>
<accession>O14518</accession>
<accession>O60484</accession>
<accession>O60618</accession>
<accession>Q2YD83</accession>
<name>SIPA1_HUMAN</name>
<keyword id="KW-0175">Coiled coil</keyword>
<keyword id="KW-0963">Cytoplasm</keyword>
<keyword id="KW-0343">GTPase activation</keyword>
<keyword id="KW-0472">Membrane</keyword>
<keyword id="KW-0539">Nucleus</keyword>
<keyword id="KW-0597">Phosphoprotein</keyword>
<keyword id="KW-1267">Proteomics identification</keyword>
<keyword id="KW-1185">Reference proteome</keyword>
<reference key="1">
    <citation type="journal article" date="1997" name="J. Biol. Chem.">
        <title>Human SPA-1 product selectively expressed in lymphoid tissues is a specific GTPase-activating protein for Rap1 and Rap2.</title>
        <authorList>
            <person name="Kurachi H."/>
            <person name="Wada Y."/>
            <person name="Tsukamoto N."/>
            <person name="Maeda M."/>
            <person name="Kubota H."/>
            <person name="Hattori M."/>
            <person name="Iwai K."/>
            <person name="Minato N."/>
        </authorList>
    </citation>
    <scope>NUCLEOTIDE SEQUENCE [MRNA]</scope>
    <scope>FUNCTION</scope>
    <scope>SUBCELLULAR LOCATION</scope>
    <scope>VARIANT PHE-182</scope>
    <source>
        <tissue>Peripheral blood lymphocyte</tissue>
    </source>
</reference>
<reference key="2">
    <citation type="journal article" date="1998" name="Gene">
        <title>Genomic organization and cloning of the human homologue of murine Sipa-1.</title>
        <authorList>
            <person name="Ebrahimi S."/>
            <person name="Wang E."/>
            <person name="Udar N."/>
            <person name="Arnold E."/>
            <person name="Burbee D."/>
            <person name="Small K."/>
            <person name="Sawicki M.P."/>
        </authorList>
    </citation>
    <scope>NUCLEOTIDE SEQUENCE [GENOMIC DNA / MRNA]</scope>
</reference>
<reference key="3">
    <citation type="journal article" date="2004" name="Genome Res.">
        <title>The status, quality, and expansion of the NIH full-length cDNA project: the Mammalian Gene Collection (MGC).</title>
        <authorList>
            <consortium name="The MGC Project Team"/>
        </authorList>
    </citation>
    <scope>NUCLEOTIDE SEQUENCE [LARGE SCALE MRNA]</scope>
    <source>
        <tissue>Cervix</tissue>
        <tissue>Pancreas</tissue>
    </source>
</reference>
<reference key="4">
    <citation type="journal article" date="2008" name="J. Proteome Res.">
        <title>Combining protein-based IMAC, peptide-based IMAC, and MudPIT for efficient phosphoproteomic analysis.</title>
        <authorList>
            <person name="Cantin G.T."/>
            <person name="Yi W."/>
            <person name="Lu B."/>
            <person name="Park S.K."/>
            <person name="Xu T."/>
            <person name="Lee J.-D."/>
            <person name="Yates J.R. III"/>
        </authorList>
    </citation>
    <scope>IDENTIFICATION BY MASS SPECTROMETRY [LARGE SCALE ANALYSIS]</scope>
    <source>
        <tissue>Cervix carcinoma</tissue>
    </source>
</reference>
<reference key="5">
    <citation type="journal article" date="2008" name="Proc. Natl. Acad. Sci. U.S.A.">
        <title>A quantitative atlas of mitotic phosphorylation.</title>
        <authorList>
            <person name="Dephoure N."/>
            <person name="Zhou C."/>
            <person name="Villen J."/>
            <person name="Beausoleil S.A."/>
            <person name="Bakalarski C.E."/>
            <person name="Elledge S.J."/>
            <person name="Gygi S.P."/>
        </authorList>
    </citation>
    <scope>PHOSPHORYLATION [LARGE SCALE ANALYSIS] AT THR-64; SER-67 AND SER-839</scope>
    <scope>IDENTIFICATION BY MASS SPECTROMETRY [LARGE SCALE ANALYSIS]</scope>
    <source>
        <tissue>Cervix carcinoma</tissue>
    </source>
</reference>
<reference key="6">
    <citation type="journal article" date="2010" name="Sci. Signal.">
        <title>Quantitative phosphoproteomics reveals widespread full phosphorylation site occupancy during mitosis.</title>
        <authorList>
            <person name="Olsen J.V."/>
            <person name="Vermeulen M."/>
            <person name="Santamaria A."/>
            <person name="Kumar C."/>
            <person name="Miller M.L."/>
            <person name="Jensen L.J."/>
            <person name="Gnad F."/>
            <person name="Cox J."/>
            <person name="Jensen T.S."/>
            <person name="Nigg E.A."/>
            <person name="Brunak S."/>
            <person name="Mann M."/>
        </authorList>
    </citation>
    <scope>PHOSPHORYLATION [LARGE SCALE ANALYSIS] AT SER-817 AND SER-839</scope>
    <scope>IDENTIFICATION BY MASS SPECTROMETRY [LARGE SCALE ANALYSIS]</scope>
    <source>
        <tissue>Cervix carcinoma</tissue>
    </source>
</reference>
<reference key="7">
    <citation type="journal article" date="2011" name="BMC Syst. Biol.">
        <title>Initial characterization of the human central proteome.</title>
        <authorList>
            <person name="Burkard T.R."/>
            <person name="Planyavsky M."/>
            <person name="Kaupe I."/>
            <person name="Breitwieser F.P."/>
            <person name="Buerckstuemmer T."/>
            <person name="Bennett K.L."/>
            <person name="Superti-Furga G."/>
            <person name="Colinge J."/>
        </authorList>
    </citation>
    <scope>IDENTIFICATION BY MASS SPECTROMETRY [LARGE SCALE ANALYSIS]</scope>
</reference>
<reference key="8">
    <citation type="journal article" date="2011" name="Sci. Signal.">
        <title>System-wide temporal characterization of the proteome and phosphoproteome of human embryonic stem cell differentiation.</title>
        <authorList>
            <person name="Rigbolt K.T."/>
            <person name="Prokhorova T.A."/>
            <person name="Akimov V."/>
            <person name="Henningsen J."/>
            <person name="Johansen P.T."/>
            <person name="Kratchmarova I."/>
            <person name="Kassem M."/>
            <person name="Mann M."/>
            <person name="Olsen J.V."/>
            <person name="Blagoev B."/>
        </authorList>
    </citation>
    <scope>IDENTIFICATION BY MASS SPECTROMETRY [LARGE SCALE ANALYSIS]</scope>
</reference>
<reference key="9">
    <citation type="journal article" date="2013" name="J. Proteome Res.">
        <title>Toward a comprehensive characterization of a human cancer cell phosphoproteome.</title>
        <authorList>
            <person name="Zhou H."/>
            <person name="Di Palma S."/>
            <person name="Preisinger C."/>
            <person name="Peng M."/>
            <person name="Polat A.N."/>
            <person name="Heck A.J."/>
            <person name="Mohammed S."/>
        </authorList>
    </citation>
    <scope>PHOSPHORYLATION [LARGE SCALE ANALYSIS] AT SER-67; SER-304; SER-314; SER-817; SER-839 AND SER-912</scope>
    <scope>IDENTIFICATION BY MASS SPECTROMETRY [LARGE SCALE ANALYSIS]</scope>
    <source>
        <tissue>Cervix carcinoma</tissue>
        <tissue>Erythroleukemia</tissue>
    </source>
</reference>
<reference key="10">
    <citation type="journal article" date="2014" name="J. Proteomics">
        <title>An enzyme assisted RP-RPLC approach for in-depth analysis of human liver phosphoproteome.</title>
        <authorList>
            <person name="Bian Y."/>
            <person name="Song C."/>
            <person name="Cheng K."/>
            <person name="Dong M."/>
            <person name="Wang F."/>
            <person name="Huang J."/>
            <person name="Sun D."/>
            <person name="Wang L."/>
            <person name="Ye M."/>
            <person name="Zou H."/>
        </authorList>
    </citation>
    <scope>PHOSPHORYLATION [LARGE SCALE ANALYSIS] AT SER-182</scope>
    <scope>IDENTIFICATION BY MASS SPECTROMETRY [LARGE SCALE ANALYSIS]</scope>
    <source>
        <tissue>Liver</tissue>
    </source>
</reference>
<feature type="chain" id="PRO_0000056744" description="Signal-induced proliferation-associated protein 1">
    <location>
        <begin position="1"/>
        <end position="1042"/>
    </location>
</feature>
<feature type="domain" description="Rap-GAP" evidence="4">
    <location>
        <begin position="321"/>
        <end position="539"/>
    </location>
</feature>
<feature type="domain" description="PDZ" evidence="3">
    <location>
        <begin position="687"/>
        <end position="763"/>
    </location>
</feature>
<feature type="region of interest" description="Disordered" evidence="5">
    <location>
        <begin position="1"/>
        <end position="87"/>
    </location>
</feature>
<feature type="region of interest" description="Disordered" evidence="5">
    <location>
        <begin position="132"/>
        <end position="153"/>
    </location>
</feature>
<feature type="region of interest" description="Disordered" evidence="5">
    <location>
        <begin position="830"/>
        <end position="903"/>
    </location>
</feature>
<feature type="region of interest" description="Disordered" evidence="5">
    <location>
        <begin position="946"/>
        <end position="980"/>
    </location>
</feature>
<feature type="coiled-coil region" evidence="2">
    <location>
        <begin position="972"/>
        <end position="1034"/>
    </location>
</feature>
<feature type="compositionally biased region" description="Polar residues" evidence="5">
    <location>
        <begin position="134"/>
        <end position="146"/>
    </location>
</feature>
<feature type="compositionally biased region" description="Low complexity" evidence="5">
    <location>
        <begin position="832"/>
        <end position="845"/>
    </location>
</feature>
<feature type="compositionally biased region" description="Basic and acidic residues" evidence="5">
    <location>
        <begin position="957"/>
        <end position="967"/>
    </location>
</feature>
<feature type="modified residue" description="Phosphothreonine" evidence="8">
    <location>
        <position position="64"/>
    </location>
</feature>
<feature type="modified residue" description="Phosphoserine" evidence="8 10">
    <location>
        <position position="67"/>
    </location>
</feature>
<feature type="modified residue" description="Phosphoserine" evidence="11">
    <location>
        <position position="182"/>
    </location>
</feature>
<feature type="modified residue" description="Phosphoserine" evidence="10">
    <location>
        <position position="304"/>
    </location>
</feature>
<feature type="modified residue" description="Phosphoserine" evidence="10">
    <location>
        <position position="314"/>
    </location>
</feature>
<feature type="modified residue" description="Phosphoserine" evidence="9 10">
    <location>
        <position position="817"/>
    </location>
</feature>
<feature type="modified residue" description="Phosphoserine" evidence="8 9 10">
    <location>
        <position position="839"/>
    </location>
</feature>
<feature type="modified residue" description="Phosphoserine" evidence="10">
    <location>
        <position position="912"/>
    </location>
</feature>
<feature type="sequence variant" id="VAR_049148" description="In dbSNP:rs35045265.">
    <original>R</original>
    <variation>Q</variation>
    <location>
        <position position="80"/>
    </location>
</feature>
<feature type="sequence variant" id="VAR_049149" description="In dbSNP:rs3741379.">
    <original>A</original>
    <variation>S</variation>
    <location>
        <position position="106"/>
    </location>
</feature>
<feature type="sequence variant" id="VAR_049150" description="In dbSNP:rs34912782.">
    <original>E</original>
    <variation>D</variation>
    <location>
        <position position="174"/>
    </location>
</feature>
<feature type="sequence variant" id="VAR_049151" description="In dbSNP:rs3741378." evidence="6">
    <original>S</original>
    <variation>F</variation>
    <location>
        <position position="182"/>
    </location>
</feature>
<feature type="sequence conflict" description="In Ref. 2; AAC32559/AAC32547." evidence="7" ref="2">
    <original>Q</original>
    <variation>H</variation>
    <location>
        <position position="30"/>
    </location>
</feature>
<feature type="sequence conflict" description="In Ref. 2; AAC32559/AAC32547." evidence="7" ref="2">
    <original>SGSD</original>
    <variation>RAAN</variation>
    <location>
        <begin position="53"/>
        <end position="56"/>
    </location>
</feature>
<feature type="sequence conflict" description="In Ref. 2; AAC32559/AAC32547." evidence="7" ref="2">
    <original>L</original>
    <variation>Q</variation>
    <location>
        <position position="93"/>
    </location>
</feature>
<feature type="sequence conflict" description="In Ref. 2; AAC32559." evidence="7" ref="2">
    <original>T</original>
    <variation>R</variation>
    <location>
        <position position="468"/>
    </location>
</feature>
<feature type="sequence conflict" description="In Ref. 2; AAC32547." evidence="7" ref="2">
    <original>T</original>
    <variation>P</variation>
    <location>
        <position position="658"/>
    </location>
</feature>
<feature type="sequence conflict" description="In Ref. 2; AAC32559/AAC32547." evidence="7" ref="2">
    <original>GLRP</original>
    <variation>AAA</variation>
    <location>
        <begin position="721"/>
        <end position="724"/>
    </location>
</feature>
<feature type="sequence conflict" description="In Ref. 2; AAC32559." evidence="7" ref="2">
    <original>EP</original>
    <variation>DA</variation>
    <location>
        <begin position="781"/>
        <end position="782"/>
    </location>
</feature>
<feature type="sequence conflict" description="In Ref. 1; BAA22197." evidence="7" ref="1">
    <original>Q</original>
    <variation>H</variation>
    <location>
        <position position="796"/>
    </location>
</feature>
<feature type="sequence conflict" description="In Ref. 1; BAA22197." evidence="7" ref="1">
    <original>S</original>
    <variation>C</variation>
    <location>
        <position position="888"/>
    </location>
</feature>
<gene>
    <name type="primary">SIPA1</name>
    <name type="synonym">SPA1</name>
</gene>
<proteinExistence type="evidence at protein level"/>
<dbReference type="EMBL" id="AB005666">
    <property type="protein sequence ID" value="BAA22197.1"/>
    <property type="molecule type" value="mRNA"/>
</dbReference>
<dbReference type="EMBL" id="AF052238">
    <property type="protein sequence ID" value="AAC32559.1"/>
    <property type="molecule type" value="Genomic_DNA"/>
</dbReference>
<dbReference type="EMBL" id="AF052233">
    <property type="protein sequence ID" value="AAC32559.1"/>
    <property type="status" value="JOINED"/>
    <property type="molecule type" value="Genomic_DNA"/>
</dbReference>
<dbReference type="EMBL" id="AF052234">
    <property type="protein sequence ID" value="AAC32559.1"/>
    <property type="status" value="JOINED"/>
    <property type="molecule type" value="Genomic_DNA"/>
</dbReference>
<dbReference type="EMBL" id="AF052235">
    <property type="protein sequence ID" value="AAC32559.1"/>
    <property type="status" value="JOINED"/>
    <property type="molecule type" value="Genomic_DNA"/>
</dbReference>
<dbReference type="EMBL" id="AF052236">
    <property type="protein sequence ID" value="AAC32559.1"/>
    <property type="status" value="JOINED"/>
    <property type="molecule type" value="Genomic_DNA"/>
</dbReference>
<dbReference type="EMBL" id="AF052237">
    <property type="protein sequence ID" value="AAC32559.1"/>
    <property type="status" value="JOINED"/>
    <property type="molecule type" value="Genomic_DNA"/>
</dbReference>
<dbReference type="EMBL" id="AF029789">
    <property type="protein sequence ID" value="AAC32547.1"/>
    <property type="molecule type" value="mRNA"/>
</dbReference>
<dbReference type="EMBL" id="BC010492">
    <property type="protein sequence ID" value="AAH10492.1"/>
    <property type="molecule type" value="mRNA"/>
</dbReference>
<dbReference type="EMBL" id="BC110353">
    <property type="protein sequence ID" value="AAI10354.1"/>
    <property type="molecule type" value="mRNA"/>
</dbReference>
<dbReference type="CCDS" id="CCDS8108.1"/>
<dbReference type="RefSeq" id="NP_006738.3">
    <property type="nucleotide sequence ID" value="NM_006747.3"/>
</dbReference>
<dbReference type="RefSeq" id="NP_694985.29">
    <property type="nucleotide sequence ID" value="NM_153253.29"/>
</dbReference>
<dbReference type="RefSeq" id="XP_005274246.1">
    <property type="nucleotide sequence ID" value="XM_005274189.3"/>
</dbReference>
<dbReference type="RefSeq" id="XP_011543516.1">
    <property type="nucleotide sequence ID" value="XM_011545214.1"/>
</dbReference>
<dbReference type="RefSeq" id="XP_047283383.1">
    <property type="nucleotide sequence ID" value="XM_047427427.1"/>
</dbReference>
<dbReference type="RefSeq" id="XP_047283384.1">
    <property type="nucleotide sequence ID" value="XM_047427428.1"/>
</dbReference>
<dbReference type="RefSeq" id="XP_047283385.1">
    <property type="nucleotide sequence ID" value="XM_047427429.1"/>
</dbReference>
<dbReference type="RefSeq" id="XP_047283386.1">
    <property type="nucleotide sequence ID" value="XM_047427430.1"/>
</dbReference>
<dbReference type="RefSeq" id="XP_047283387.1">
    <property type="nucleotide sequence ID" value="XM_047427431.1"/>
</dbReference>
<dbReference type="RefSeq" id="XP_054225637.1">
    <property type="nucleotide sequence ID" value="XM_054369662.1"/>
</dbReference>
<dbReference type="RefSeq" id="XP_054225638.1">
    <property type="nucleotide sequence ID" value="XM_054369663.1"/>
</dbReference>
<dbReference type="RefSeq" id="XP_054225639.1">
    <property type="nucleotide sequence ID" value="XM_054369664.1"/>
</dbReference>
<dbReference type="RefSeq" id="XP_054225640.1">
    <property type="nucleotide sequence ID" value="XM_054369665.1"/>
</dbReference>
<dbReference type="RefSeq" id="XP_054225641.1">
    <property type="nucleotide sequence ID" value="XM_054369666.1"/>
</dbReference>
<dbReference type="SMR" id="Q96FS4"/>
<dbReference type="BioGRID" id="112385">
    <property type="interactions" value="45"/>
</dbReference>
<dbReference type="FunCoup" id="Q96FS4">
    <property type="interactions" value="860"/>
</dbReference>
<dbReference type="IntAct" id="Q96FS4">
    <property type="interactions" value="31"/>
</dbReference>
<dbReference type="MINT" id="Q96FS4"/>
<dbReference type="STRING" id="9606.ENSP00000377771"/>
<dbReference type="GlyGen" id="Q96FS4">
    <property type="glycosylation" value="2 sites, 1 O-linked glycan (1 site)"/>
</dbReference>
<dbReference type="iPTMnet" id="Q96FS4"/>
<dbReference type="PhosphoSitePlus" id="Q96FS4"/>
<dbReference type="BioMuta" id="SIPA1"/>
<dbReference type="DMDM" id="20455286"/>
<dbReference type="jPOST" id="Q96FS4"/>
<dbReference type="MassIVE" id="Q96FS4"/>
<dbReference type="PaxDb" id="9606-ENSP00000377771"/>
<dbReference type="PeptideAtlas" id="Q96FS4"/>
<dbReference type="ProteomicsDB" id="76551"/>
<dbReference type="Pumba" id="Q96FS4"/>
<dbReference type="Antibodypedia" id="29889">
    <property type="antibodies" value="313 antibodies from 31 providers"/>
</dbReference>
<dbReference type="DNASU" id="6494"/>
<dbReference type="Ensembl" id="ENST00000394224.3">
    <property type="protein sequence ID" value="ENSP00000377771.3"/>
    <property type="gene ID" value="ENSG00000213445.10"/>
</dbReference>
<dbReference type="Ensembl" id="ENST00000534313.6">
    <property type="protein sequence ID" value="ENSP00000436269.1"/>
    <property type="gene ID" value="ENSG00000213445.10"/>
</dbReference>
<dbReference type="GeneID" id="6494"/>
<dbReference type="KEGG" id="hsa:6494"/>
<dbReference type="MANE-Select" id="ENST00000534313.6">
    <property type="protein sequence ID" value="ENSP00000436269.1"/>
    <property type="RefSeq nucleotide sequence ID" value="NM_006747.4"/>
    <property type="RefSeq protein sequence ID" value="NP_006738.3"/>
</dbReference>
<dbReference type="UCSC" id="uc001ofb.3">
    <property type="organism name" value="human"/>
</dbReference>
<dbReference type="AGR" id="HGNC:10885"/>
<dbReference type="CTD" id="6494"/>
<dbReference type="DisGeNET" id="6494"/>
<dbReference type="GeneCards" id="SIPA1"/>
<dbReference type="HGNC" id="HGNC:10885">
    <property type="gene designation" value="SIPA1"/>
</dbReference>
<dbReference type="HPA" id="ENSG00000213445">
    <property type="expression patterns" value="Tissue enhanced (lymphoid)"/>
</dbReference>
<dbReference type="MIM" id="602180">
    <property type="type" value="gene"/>
</dbReference>
<dbReference type="neXtProt" id="NX_Q96FS4"/>
<dbReference type="OpenTargets" id="ENSG00000213445"/>
<dbReference type="PharmGKB" id="PA35785"/>
<dbReference type="VEuPathDB" id="HostDB:ENSG00000213445"/>
<dbReference type="eggNOG" id="KOG3686">
    <property type="taxonomic scope" value="Eukaryota"/>
</dbReference>
<dbReference type="GeneTree" id="ENSGT00940000160644"/>
<dbReference type="InParanoid" id="Q96FS4"/>
<dbReference type="OMA" id="FRTTEQM"/>
<dbReference type="OrthoDB" id="2499658at2759"/>
<dbReference type="PAN-GO" id="Q96FS4">
    <property type="GO annotations" value="3 GO annotations based on evolutionary models"/>
</dbReference>
<dbReference type="PhylomeDB" id="Q96FS4"/>
<dbReference type="TreeFam" id="TF318626"/>
<dbReference type="PathwayCommons" id="Q96FS4"/>
<dbReference type="Reactome" id="R-HSA-392517">
    <property type="pathway name" value="Rap1 signalling"/>
</dbReference>
<dbReference type="SignaLink" id="Q96FS4"/>
<dbReference type="BioGRID-ORCS" id="6494">
    <property type="hits" value="48 hits in 1161 CRISPR screens"/>
</dbReference>
<dbReference type="ChiTaRS" id="SIPA1">
    <property type="organism name" value="human"/>
</dbReference>
<dbReference type="GeneWiki" id="SIPA1"/>
<dbReference type="GenomeRNAi" id="6494"/>
<dbReference type="Pharos" id="Q96FS4">
    <property type="development level" value="Tbio"/>
</dbReference>
<dbReference type="PRO" id="PR:Q96FS4"/>
<dbReference type="Proteomes" id="UP000005640">
    <property type="component" value="Chromosome 11"/>
</dbReference>
<dbReference type="RNAct" id="Q96FS4">
    <property type="molecule type" value="protein"/>
</dbReference>
<dbReference type="Bgee" id="ENSG00000213445">
    <property type="expression patterns" value="Expressed in granulocyte and 115 other cell types or tissues"/>
</dbReference>
<dbReference type="ExpressionAtlas" id="Q96FS4">
    <property type="expression patterns" value="baseline and differential"/>
</dbReference>
<dbReference type="GO" id="GO:0005737">
    <property type="term" value="C:cytoplasm"/>
    <property type="evidence" value="ECO:0000318"/>
    <property type="project" value="GO_Central"/>
</dbReference>
<dbReference type="GO" id="GO:0005829">
    <property type="term" value="C:cytosol"/>
    <property type="evidence" value="ECO:0000304"/>
    <property type="project" value="Reactome"/>
</dbReference>
<dbReference type="GO" id="GO:0012505">
    <property type="term" value="C:endomembrane system"/>
    <property type="evidence" value="ECO:0007669"/>
    <property type="project" value="UniProtKB-SubCell"/>
</dbReference>
<dbReference type="GO" id="GO:0016020">
    <property type="term" value="C:membrane"/>
    <property type="evidence" value="ECO:0007669"/>
    <property type="project" value="UniProtKB-KW"/>
</dbReference>
<dbReference type="GO" id="GO:0005634">
    <property type="term" value="C:nucleus"/>
    <property type="evidence" value="ECO:0007669"/>
    <property type="project" value="UniProtKB-SubCell"/>
</dbReference>
<dbReference type="GO" id="GO:0048471">
    <property type="term" value="C:perinuclear region of cytoplasm"/>
    <property type="evidence" value="ECO:0007669"/>
    <property type="project" value="UniProtKB-SubCell"/>
</dbReference>
<dbReference type="GO" id="GO:0032991">
    <property type="term" value="C:protein-containing complex"/>
    <property type="evidence" value="ECO:0007669"/>
    <property type="project" value="Ensembl"/>
</dbReference>
<dbReference type="GO" id="GO:0005096">
    <property type="term" value="F:GTPase activator activity"/>
    <property type="evidence" value="ECO:0000269"/>
    <property type="project" value="Reactome"/>
</dbReference>
<dbReference type="GO" id="GO:0002250">
    <property type="term" value="P:adaptive immune response"/>
    <property type="evidence" value="ECO:0000304"/>
    <property type="project" value="Reactome"/>
</dbReference>
<dbReference type="GO" id="GO:0042631">
    <property type="term" value="P:cellular response to water deprivation"/>
    <property type="evidence" value="ECO:0007669"/>
    <property type="project" value="Ensembl"/>
</dbReference>
<dbReference type="GO" id="GO:0007010">
    <property type="term" value="P:cytoskeleton organization"/>
    <property type="evidence" value="ECO:0000303"/>
    <property type="project" value="UniProtKB"/>
</dbReference>
<dbReference type="GO" id="GO:0035556">
    <property type="term" value="P:intracellular signal transduction"/>
    <property type="evidence" value="ECO:0000303"/>
    <property type="project" value="UniProtKB"/>
</dbReference>
<dbReference type="GO" id="GO:0007162">
    <property type="term" value="P:negative regulation of cell adhesion"/>
    <property type="evidence" value="ECO:0000303"/>
    <property type="project" value="UniProtKB"/>
</dbReference>
<dbReference type="GO" id="GO:0045786">
    <property type="term" value="P:negative regulation of cell cycle"/>
    <property type="evidence" value="ECO:0000303"/>
    <property type="project" value="UniProtKB"/>
</dbReference>
<dbReference type="GO" id="GO:0030308">
    <property type="term" value="P:negative regulation of cell growth"/>
    <property type="evidence" value="ECO:0000303"/>
    <property type="project" value="UniProtKB"/>
</dbReference>
<dbReference type="GO" id="GO:0051056">
    <property type="term" value="P:regulation of small GTPase mediated signal transduction"/>
    <property type="evidence" value="ECO:0007669"/>
    <property type="project" value="InterPro"/>
</dbReference>
<dbReference type="GO" id="GO:0007165">
    <property type="term" value="P:signal transduction"/>
    <property type="evidence" value="ECO:0000304"/>
    <property type="project" value="ProtInc"/>
</dbReference>
<dbReference type="CDD" id="cd06745">
    <property type="entry name" value="PDZ_SIPA1-like"/>
    <property type="match status" value="1"/>
</dbReference>
<dbReference type="FunFam" id="2.30.42.10:FF:000176">
    <property type="entry name" value="Signal-induced proliferation-associated 1"/>
    <property type="match status" value="1"/>
</dbReference>
<dbReference type="FunFam" id="3.40.50.11210:FF:000002">
    <property type="entry name" value="Signal-induced proliferation-associated 1-like protein 1"/>
    <property type="match status" value="1"/>
</dbReference>
<dbReference type="Gene3D" id="2.30.42.10">
    <property type="match status" value="1"/>
</dbReference>
<dbReference type="Gene3D" id="6.10.140.210">
    <property type="match status" value="1"/>
</dbReference>
<dbReference type="Gene3D" id="3.40.50.11210">
    <property type="entry name" value="Rap/Ran-GAP"/>
    <property type="match status" value="1"/>
</dbReference>
<dbReference type="InterPro" id="IPR001478">
    <property type="entry name" value="PDZ"/>
</dbReference>
<dbReference type="InterPro" id="IPR036034">
    <property type="entry name" value="PDZ_sf"/>
</dbReference>
<dbReference type="InterPro" id="IPR035974">
    <property type="entry name" value="Rap/Ran-GAP_sf"/>
</dbReference>
<dbReference type="InterPro" id="IPR000331">
    <property type="entry name" value="Rap/Ran_GAP_dom"/>
</dbReference>
<dbReference type="InterPro" id="IPR050989">
    <property type="entry name" value="Rap1_Ran_GAP"/>
</dbReference>
<dbReference type="PANTHER" id="PTHR15711">
    <property type="entry name" value="RAP GTPASE-ACTIVATING PROTEIN"/>
    <property type="match status" value="1"/>
</dbReference>
<dbReference type="PANTHER" id="PTHR15711:SF14">
    <property type="entry name" value="SIGNAL-INDUCED PROLIFERATION-ASSOCIATED PROTEIN 1"/>
    <property type="match status" value="1"/>
</dbReference>
<dbReference type="Pfam" id="PF00595">
    <property type="entry name" value="PDZ"/>
    <property type="match status" value="1"/>
</dbReference>
<dbReference type="Pfam" id="PF21022">
    <property type="entry name" value="Rap-GAP_dimer"/>
    <property type="match status" value="1"/>
</dbReference>
<dbReference type="Pfam" id="PF02145">
    <property type="entry name" value="Rap_GAP"/>
    <property type="match status" value="1"/>
</dbReference>
<dbReference type="SMART" id="SM00228">
    <property type="entry name" value="PDZ"/>
    <property type="match status" value="1"/>
</dbReference>
<dbReference type="SUPFAM" id="SSF90257">
    <property type="entry name" value="Myosin rod fragments"/>
    <property type="match status" value="1"/>
</dbReference>
<dbReference type="SUPFAM" id="SSF50156">
    <property type="entry name" value="PDZ domain-like"/>
    <property type="match status" value="1"/>
</dbReference>
<dbReference type="SUPFAM" id="SSF111347">
    <property type="entry name" value="Rap/Ran-GAP"/>
    <property type="match status" value="1"/>
</dbReference>
<dbReference type="PROSITE" id="PS50106">
    <property type="entry name" value="PDZ"/>
    <property type="match status" value="1"/>
</dbReference>
<dbReference type="PROSITE" id="PS50085">
    <property type="entry name" value="RAPGAP"/>
    <property type="match status" value="1"/>
</dbReference>